<organism>
    <name type="scientific">Arabidopsis thaliana</name>
    <name type="common">Mouse-ear cress</name>
    <dbReference type="NCBI Taxonomy" id="3702"/>
    <lineage>
        <taxon>Eukaryota</taxon>
        <taxon>Viridiplantae</taxon>
        <taxon>Streptophyta</taxon>
        <taxon>Embryophyta</taxon>
        <taxon>Tracheophyta</taxon>
        <taxon>Spermatophyta</taxon>
        <taxon>Magnoliopsida</taxon>
        <taxon>eudicotyledons</taxon>
        <taxon>Gunneridae</taxon>
        <taxon>Pentapetalae</taxon>
        <taxon>rosids</taxon>
        <taxon>malvids</taxon>
        <taxon>Brassicales</taxon>
        <taxon>Brassicaceae</taxon>
        <taxon>Camelineae</taxon>
        <taxon>Arabidopsis</taxon>
    </lineage>
</organism>
<keyword id="KW-0063">Aspartyl esterase</keyword>
<keyword id="KW-0134">Cell wall</keyword>
<keyword id="KW-0961">Cell wall biogenesis/degradation</keyword>
<keyword id="KW-1015">Disulfide bond</keyword>
<keyword id="KW-0325">Glycoprotein</keyword>
<keyword id="KW-0378">Hydrolase</keyword>
<keyword id="KW-1185">Reference proteome</keyword>
<keyword id="KW-0964">Secreted</keyword>
<keyword id="KW-0732">Signal</keyword>
<reference key="1">
    <citation type="journal article" date="2000" name="Nature">
        <title>Sequence and analysis of chromosome 3 of the plant Arabidopsis thaliana.</title>
        <authorList>
            <person name="Salanoubat M."/>
            <person name="Lemcke K."/>
            <person name="Rieger M."/>
            <person name="Ansorge W."/>
            <person name="Unseld M."/>
            <person name="Fartmann B."/>
            <person name="Valle G."/>
            <person name="Bloecker H."/>
            <person name="Perez-Alonso M."/>
            <person name="Obermaier B."/>
            <person name="Delseny M."/>
            <person name="Boutry M."/>
            <person name="Grivell L.A."/>
            <person name="Mache R."/>
            <person name="Puigdomenech P."/>
            <person name="De Simone V."/>
            <person name="Choisne N."/>
            <person name="Artiguenave F."/>
            <person name="Robert C."/>
            <person name="Brottier P."/>
            <person name="Wincker P."/>
            <person name="Cattolico L."/>
            <person name="Weissenbach J."/>
            <person name="Saurin W."/>
            <person name="Quetier F."/>
            <person name="Schaefer M."/>
            <person name="Mueller-Auer S."/>
            <person name="Gabel C."/>
            <person name="Fuchs M."/>
            <person name="Benes V."/>
            <person name="Wurmbach E."/>
            <person name="Drzonek H."/>
            <person name="Erfle H."/>
            <person name="Jordan N."/>
            <person name="Bangert S."/>
            <person name="Wiedelmann R."/>
            <person name="Kranz H."/>
            <person name="Voss H."/>
            <person name="Holland R."/>
            <person name="Brandt P."/>
            <person name="Nyakatura G."/>
            <person name="Vezzi A."/>
            <person name="D'Angelo M."/>
            <person name="Pallavicini A."/>
            <person name="Toppo S."/>
            <person name="Simionati B."/>
            <person name="Conrad A."/>
            <person name="Hornischer K."/>
            <person name="Kauer G."/>
            <person name="Loehnert T.-H."/>
            <person name="Nordsiek G."/>
            <person name="Reichelt J."/>
            <person name="Scharfe M."/>
            <person name="Schoen O."/>
            <person name="Bargues M."/>
            <person name="Terol J."/>
            <person name="Climent J."/>
            <person name="Navarro P."/>
            <person name="Collado C."/>
            <person name="Perez-Perez A."/>
            <person name="Ottenwaelder B."/>
            <person name="Duchemin D."/>
            <person name="Cooke R."/>
            <person name="Laudie M."/>
            <person name="Berger-Llauro C."/>
            <person name="Purnelle B."/>
            <person name="Masuy D."/>
            <person name="de Haan M."/>
            <person name="Maarse A.C."/>
            <person name="Alcaraz J.-P."/>
            <person name="Cottet A."/>
            <person name="Casacuberta E."/>
            <person name="Monfort A."/>
            <person name="Argiriou A."/>
            <person name="Flores M."/>
            <person name="Liguori R."/>
            <person name="Vitale D."/>
            <person name="Mannhaupt G."/>
            <person name="Haase D."/>
            <person name="Schoof H."/>
            <person name="Rudd S."/>
            <person name="Zaccaria P."/>
            <person name="Mewes H.-W."/>
            <person name="Mayer K.F.X."/>
            <person name="Kaul S."/>
            <person name="Town C.D."/>
            <person name="Koo H.L."/>
            <person name="Tallon L.J."/>
            <person name="Jenkins J."/>
            <person name="Rooney T."/>
            <person name="Rizzo M."/>
            <person name="Walts A."/>
            <person name="Utterback T."/>
            <person name="Fujii C.Y."/>
            <person name="Shea T.P."/>
            <person name="Creasy T.H."/>
            <person name="Haas B."/>
            <person name="Maiti R."/>
            <person name="Wu D."/>
            <person name="Peterson J."/>
            <person name="Van Aken S."/>
            <person name="Pai G."/>
            <person name="Militscher J."/>
            <person name="Sellers P."/>
            <person name="Gill J.E."/>
            <person name="Feldblyum T.V."/>
            <person name="Preuss D."/>
            <person name="Lin X."/>
            <person name="Nierman W.C."/>
            <person name="Salzberg S.L."/>
            <person name="White O."/>
            <person name="Venter J.C."/>
            <person name="Fraser C.M."/>
            <person name="Kaneko T."/>
            <person name="Nakamura Y."/>
            <person name="Sato S."/>
            <person name="Kato T."/>
            <person name="Asamizu E."/>
            <person name="Sasamoto S."/>
            <person name="Kimura T."/>
            <person name="Idesawa K."/>
            <person name="Kawashima K."/>
            <person name="Kishida Y."/>
            <person name="Kiyokawa C."/>
            <person name="Kohara M."/>
            <person name="Matsumoto M."/>
            <person name="Matsuno A."/>
            <person name="Muraki A."/>
            <person name="Nakayama S."/>
            <person name="Nakazaki N."/>
            <person name="Shinpo S."/>
            <person name="Takeuchi C."/>
            <person name="Wada T."/>
            <person name="Watanabe A."/>
            <person name="Yamada M."/>
            <person name="Yasuda M."/>
            <person name="Tabata S."/>
        </authorList>
    </citation>
    <scope>NUCLEOTIDE SEQUENCE [LARGE SCALE GENOMIC DNA]</scope>
    <source>
        <strain>cv. Columbia</strain>
    </source>
</reference>
<reference key="2">
    <citation type="journal article" date="2017" name="Plant J.">
        <title>Araport11: a complete reannotation of the Arabidopsis thaliana reference genome.</title>
        <authorList>
            <person name="Cheng C.Y."/>
            <person name="Krishnakumar V."/>
            <person name="Chan A.P."/>
            <person name="Thibaud-Nissen F."/>
            <person name="Schobel S."/>
            <person name="Town C.D."/>
        </authorList>
    </citation>
    <scope>GENOME REANNOTATION</scope>
    <source>
        <strain>cv. Columbia</strain>
    </source>
</reference>
<reference key="3">
    <citation type="journal article" date="2004" name="Carbohydr. Res.">
        <title>Pectin methylesterases: sequence-structural features and phylogenetic relationships.</title>
        <authorList>
            <person name="Markovic O."/>
            <person name="Janecek S."/>
        </authorList>
    </citation>
    <scope>GENE FAMILY</scope>
    <scope>NOMENCLATURE</scope>
</reference>
<comment type="function">
    <text evidence="1">Acts in the modification of cell walls via demethylesterification of cell wall pectin.</text>
</comment>
<comment type="catalytic activity">
    <reaction>
        <text>[(1-&gt;4)-alpha-D-galacturonosyl methyl ester](n) + n H2O = [(1-&gt;4)-alpha-D-galacturonosyl](n) + n methanol + n H(+)</text>
        <dbReference type="Rhea" id="RHEA:22380"/>
        <dbReference type="Rhea" id="RHEA-COMP:14570"/>
        <dbReference type="Rhea" id="RHEA-COMP:14573"/>
        <dbReference type="ChEBI" id="CHEBI:15377"/>
        <dbReference type="ChEBI" id="CHEBI:15378"/>
        <dbReference type="ChEBI" id="CHEBI:17790"/>
        <dbReference type="ChEBI" id="CHEBI:140522"/>
        <dbReference type="ChEBI" id="CHEBI:140523"/>
        <dbReference type="EC" id="3.1.1.11"/>
    </reaction>
</comment>
<comment type="pathway">
    <text>Glycan metabolism; pectin degradation; 2-dehydro-3-deoxy-D-gluconate from pectin: step 1/5.</text>
</comment>
<comment type="subcellular location">
    <subcellularLocation>
        <location evidence="1">Secreted</location>
        <location evidence="1">Cell wall</location>
    </subcellularLocation>
</comment>
<comment type="miscellaneous">
    <text>The PMEI region may act as an autoinhibitory domain and prevent untimely PME activity during transport.</text>
</comment>
<comment type="similarity">
    <text evidence="4">In the N-terminal section; belongs to the PMEI family.</text>
</comment>
<comment type="similarity">
    <text evidence="4">In the C-terminal section; belongs to the pectinesterase family.</text>
</comment>
<feature type="signal peptide" evidence="2">
    <location>
        <begin position="1"/>
        <end position="19"/>
    </location>
</feature>
<feature type="chain" id="PRO_0000371678" description="Putative pectinesterase/pectinesterase inhibitor 22">
    <location>
        <begin position="20"/>
        <end position="543"/>
    </location>
</feature>
<feature type="region of interest" description="Pectinesterase inhibitor 22">
    <location>
        <begin position="38"/>
        <end position="197"/>
    </location>
</feature>
<feature type="region of interest" description="Pectinesterase 22">
    <location>
        <begin position="240"/>
        <end position="527"/>
    </location>
</feature>
<feature type="active site" description="Proton donor; for pectinesterase activity" evidence="3">
    <location>
        <position position="368"/>
    </location>
</feature>
<feature type="active site" description="Nucleophile; for pectinesterase activity" evidence="3">
    <location>
        <position position="389"/>
    </location>
</feature>
<feature type="binding site" evidence="1">
    <location>
        <position position="315"/>
    </location>
    <ligand>
        <name>substrate</name>
        <note>for pectinesterase activity</note>
    </ligand>
</feature>
<feature type="binding site" evidence="1">
    <location>
        <position position="345"/>
    </location>
    <ligand>
        <name>substrate</name>
        <note>for pectinesterase activity</note>
    </ligand>
</feature>
<feature type="binding site" evidence="1">
    <location>
        <position position="448"/>
    </location>
    <ligand>
        <name>substrate</name>
        <note>for pectinesterase activity</note>
    </ligand>
</feature>
<feature type="binding site" evidence="1">
    <location>
        <position position="450"/>
    </location>
    <ligand>
        <name>substrate</name>
        <note>for pectinesterase activity</note>
    </ligand>
</feature>
<feature type="site" description="Transition state stabilizer" evidence="1">
    <location>
        <position position="367"/>
    </location>
</feature>
<feature type="glycosylation site" description="N-linked (GlcNAc...) asparagine" evidence="2">
    <location>
        <position position="211"/>
    </location>
</feature>
<feature type="glycosylation site" description="N-linked (GlcNAc...) asparagine" evidence="2">
    <location>
        <position position="263"/>
    </location>
</feature>
<feature type="disulfide bond" evidence="1">
    <location>
        <begin position="382"/>
        <end position="402"/>
    </location>
</feature>
<name>PME22_ARATH</name>
<sequence length="543" mass="60806">MGITTALLLVMLMSVHTSSYETTILKPYKEDNFRSLVAKACQFIDAHELCVSNIWTHVKESGHGLNPHSVLRAAVKEAHDKAKLAMERIPTVMMLSIRSREQVAIEDCKELVGFSVTELAWSMLEMNKLHGGGGIDLDDGSHDAAAAGGNLKTWLSAAMSNQDTCLEGFEGTERKYEELIKGSLRQVTQLVSNVLDMYTQLNALPFKASRNESVIASPEWLTETDESLMMRHDPSVMHPNTVVAIDGKGKYRTINEAINEAPNHSTKRYVIYVKKGVYKENIDLKKKKTNIMLVGDGIGQTIITGDRNFMQGLTTFRTATVAVSGRGFIAKDITFRNTAGPQNRQAVALRVDSDQSAFYRCSVEGYQDTLYAHSLRQFYRDCEIYGTIDFIFGNGAAVLQNCKIYTRVPLPLQKVTITAQGRKSPNQNTGFVIQNSYVLATQPTYLGRPWKLYSRTVYMNTYMSQLVQPRGWLEWFGNFALDTLWYGEYNNIGPGWRSSGRVKWPGYHIMDKRTALSFTVGSFIDGRRWLPATGVTFTAGLAN</sequence>
<gene>
    <name type="primary">PME22</name>
    <name type="synonym">ARATH22</name>
    <name type="ordered locus">At3g05620</name>
    <name type="ORF">F18C1.11</name>
</gene>
<protein>
    <recommendedName>
        <fullName>Putative pectinesterase/pectinesterase inhibitor 22</fullName>
    </recommendedName>
    <domain>
        <recommendedName>
            <fullName>Pectinesterase inhibitor 22</fullName>
        </recommendedName>
        <alternativeName>
            <fullName>Pectin methylesterase inhibitor 22</fullName>
        </alternativeName>
    </domain>
    <domain>
        <recommendedName>
            <fullName>Pectinesterase 22</fullName>
            <shortName>PE 22</shortName>
            <ecNumber>3.1.1.11</ecNumber>
        </recommendedName>
        <alternativeName>
            <fullName>Pectin methylesterase 22</fullName>
            <shortName>AtPME22</shortName>
        </alternativeName>
    </domain>
</protein>
<evidence type="ECO:0000250" key="1"/>
<evidence type="ECO:0000255" key="2"/>
<evidence type="ECO:0000255" key="3">
    <source>
        <dbReference type="PROSITE-ProRule" id="PRU10040"/>
    </source>
</evidence>
<evidence type="ECO:0000305" key="4"/>
<accession>Q9M9W7</accession>
<proteinExistence type="inferred from homology"/>
<dbReference type="EC" id="3.1.1.11"/>
<dbReference type="EMBL" id="AC011620">
    <property type="protein sequence ID" value="AAF26135.1"/>
    <property type="molecule type" value="Genomic_DNA"/>
</dbReference>
<dbReference type="EMBL" id="CP002686">
    <property type="protein sequence ID" value="AEE74267.1"/>
    <property type="molecule type" value="Genomic_DNA"/>
</dbReference>
<dbReference type="RefSeq" id="NP_187213.1">
    <property type="nucleotide sequence ID" value="NM_111435.2"/>
</dbReference>
<dbReference type="SMR" id="Q9M9W7"/>
<dbReference type="FunCoup" id="Q9M9W7">
    <property type="interactions" value="139"/>
</dbReference>
<dbReference type="STRING" id="3702.Q9M9W7"/>
<dbReference type="GlyCosmos" id="Q9M9W7">
    <property type="glycosylation" value="2 sites, No reported glycans"/>
</dbReference>
<dbReference type="GlyGen" id="Q9M9W7">
    <property type="glycosylation" value="2 sites"/>
</dbReference>
<dbReference type="MetOSite" id="Q9M9W7"/>
<dbReference type="PaxDb" id="3702-AT3G05620.1"/>
<dbReference type="ProteomicsDB" id="234680"/>
<dbReference type="EnsemblPlants" id="AT3G05620.1">
    <property type="protein sequence ID" value="AT3G05620.1"/>
    <property type="gene ID" value="AT3G05620"/>
</dbReference>
<dbReference type="GeneID" id="819728"/>
<dbReference type="Gramene" id="AT3G05620.1">
    <property type="protein sequence ID" value="AT3G05620.1"/>
    <property type="gene ID" value="AT3G05620"/>
</dbReference>
<dbReference type="KEGG" id="ath:AT3G05620"/>
<dbReference type="Araport" id="AT3G05620"/>
<dbReference type="TAIR" id="AT3G05620"/>
<dbReference type="eggNOG" id="ENOG502QU1M">
    <property type="taxonomic scope" value="Eukaryota"/>
</dbReference>
<dbReference type="HOGENOM" id="CLU_012243_9_1_1"/>
<dbReference type="InParanoid" id="Q9M9W7"/>
<dbReference type="OMA" id="WSMLEMN"/>
<dbReference type="PhylomeDB" id="Q9M9W7"/>
<dbReference type="BioCyc" id="ARA:AT3G05620-MONOMER"/>
<dbReference type="UniPathway" id="UPA00545">
    <property type="reaction ID" value="UER00823"/>
</dbReference>
<dbReference type="PRO" id="PR:Q9M9W7"/>
<dbReference type="Proteomes" id="UP000006548">
    <property type="component" value="Chromosome 3"/>
</dbReference>
<dbReference type="ExpressionAtlas" id="Q9M9W7">
    <property type="expression patterns" value="baseline and differential"/>
</dbReference>
<dbReference type="GO" id="GO:0005576">
    <property type="term" value="C:extracellular region"/>
    <property type="evidence" value="ECO:0007669"/>
    <property type="project" value="UniProtKB-KW"/>
</dbReference>
<dbReference type="GO" id="GO:0004857">
    <property type="term" value="F:enzyme inhibitor activity"/>
    <property type="evidence" value="ECO:0007669"/>
    <property type="project" value="InterPro"/>
</dbReference>
<dbReference type="GO" id="GO:0030599">
    <property type="term" value="F:pectinesterase activity"/>
    <property type="evidence" value="ECO:0007669"/>
    <property type="project" value="UniProtKB-EC"/>
</dbReference>
<dbReference type="GO" id="GO:0042545">
    <property type="term" value="P:cell wall modification"/>
    <property type="evidence" value="ECO:0007669"/>
    <property type="project" value="InterPro"/>
</dbReference>
<dbReference type="GO" id="GO:0045490">
    <property type="term" value="P:pectin catabolic process"/>
    <property type="evidence" value="ECO:0007669"/>
    <property type="project" value="UniProtKB-UniPathway"/>
</dbReference>
<dbReference type="CDD" id="cd15799">
    <property type="entry name" value="PMEI-like_4"/>
    <property type="match status" value="1"/>
</dbReference>
<dbReference type="FunFam" id="1.20.140.40:FF:000018">
    <property type="entry name" value="Pectinesterase"/>
    <property type="match status" value="1"/>
</dbReference>
<dbReference type="FunFam" id="2.160.20.10:FF:000001">
    <property type="entry name" value="Pectinesterase"/>
    <property type="match status" value="1"/>
</dbReference>
<dbReference type="Gene3D" id="1.20.140.40">
    <property type="entry name" value="Invertase/pectin methylesterase inhibitor family protein"/>
    <property type="match status" value="1"/>
</dbReference>
<dbReference type="Gene3D" id="2.160.20.10">
    <property type="entry name" value="Single-stranded right-handed beta-helix, Pectin lyase-like"/>
    <property type="match status" value="1"/>
</dbReference>
<dbReference type="InterPro" id="IPR035513">
    <property type="entry name" value="Invertase/methylesterase_inhib"/>
</dbReference>
<dbReference type="InterPro" id="IPR012334">
    <property type="entry name" value="Pectin_lyas_fold"/>
</dbReference>
<dbReference type="InterPro" id="IPR011050">
    <property type="entry name" value="Pectin_lyase_fold/virulence"/>
</dbReference>
<dbReference type="InterPro" id="IPR033131">
    <property type="entry name" value="Pectinesterase_Asp_AS"/>
</dbReference>
<dbReference type="InterPro" id="IPR000070">
    <property type="entry name" value="Pectinesterase_cat"/>
</dbReference>
<dbReference type="InterPro" id="IPR006501">
    <property type="entry name" value="Pectinesterase_inhib_dom"/>
</dbReference>
<dbReference type="InterPro" id="IPR018040">
    <property type="entry name" value="Pectinesterase_Tyr_AS"/>
</dbReference>
<dbReference type="NCBIfam" id="TIGR01614">
    <property type="entry name" value="PME_inhib"/>
    <property type="match status" value="1"/>
</dbReference>
<dbReference type="PANTHER" id="PTHR31707">
    <property type="entry name" value="PECTINESTERASE"/>
    <property type="match status" value="1"/>
</dbReference>
<dbReference type="Pfam" id="PF01095">
    <property type="entry name" value="Pectinesterase"/>
    <property type="match status" value="1"/>
</dbReference>
<dbReference type="Pfam" id="PF04043">
    <property type="entry name" value="PMEI"/>
    <property type="match status" value="1"/>
</dbReference>
<dbReference type="SMART" id="SM00856">
    <property type="entry name" value="PMEI"/>
    <property type="match status" value="1"/>
</dbReference>
<dbReference type="SUPFAM" id="SSF51126">
    <property type="entry name" value="Pectin lyase-like"/>
    <property type="match status" value="1"/>
</dbReference>
<dbReference type="SUPFAM" id="SSF101148">
    <property type="entry name" value="Plant invertase/pectin methylesterase inhibitor"/>
    <property type="match status" value="1"/>
</dbReference>
<dbReference type="PROSITE" id="PS00800">
    <property type="entry name" value="PECTINESTERASE_1"/>
    <property type="match status" value="1"/>
</dbReference>
<dbReference type="PROSITE" id="PS00503">
    <property type="entry name" value="PECTINESTERASE_2"/>
    <property type="match status" value="1"/>
</dbReference>